<name>CHRYS_TANCI</name>
<organism>
    <name type="scientific">Tanacetum cinerariifolium</name>
    <name type="common">Dalmatian daisy</name>
    <name type="synonym">Chrysanthemum cinerariifolium</name>
    <dbReference type="NCBI Taxonomy" id="118510"/>
    <lineage>
        <taxon>Eukaryota</taxon>
        <taxon>Viridiplantae</taxon>
        <taxon>Streptophyta</taxon>
        <taxon>Embryophyta</taxon>
        <taxon>Tracheophyta</taxon>
        <taxon>Spermatophyta</taxon>
        <taxon>Magnoliopsida</taxon>
        <taxon>eudicotyledons</taxon>
        <taxon>Gunneridae</taxon>
        <taxon>Pentapetalae</taxon>
        <taxon>asterids</taxon>
        <taxon>campanulids</taxon>
        <taxon>Asterales</taxon>
        <taxon>Asteraceae</taxon>
        <taxon>Asteroideae</taxon>
        <taxon>Anthemideae</taxon>
        <taxon>Anthemidinae</taxon>
        <taxon>Tanacetum</taxon>
    </lineage>
</organism>
<evidence type="ECO:0000250" key="1">
    <source>
        <dbReference type="UniProtKB" id="P14324"/>
    </source>
</evidence>
<evidence type="ECO:0000250" key="2">
    <source>
        <dbReference type="UniProtKB" id="Q12051"/>
    </source>
</evidence>
<evidence type="ECO:0000255" key="3"/>
<evidence type="ECO:0000256" key="4">
    <source>
        <dbReference type="SAM" id="MobiDB-lite"/>
    </source>
</evidence>
<evidence type="ECO:0000269" key="5">
    <source>
    </source>
</evidence>
<evidence type="ECO:0000269" key="6">
    <source>
    </source>
</evidence>
<evidence type="ECO:0000269" key="7">
    <source>
    </source>
</evidence>
<evidence type="ECO:0000269" key="8">
    <source>
    </source>
</evidence>
<evidence type="ECO:0000303" key="9">
    <source>
    </source>
</evidence>
<evidence type="ECO:0000303" key="10">
    <source>
    </source>
</evidence>
<evidence type="ECO:0000303" key="11">
    <source>
    </source>
</evidence>
<evidence type="ECO:0000305" key="12"/>
<dbReference type="EC" id="3.7.1.-" evidence="7"/>
<dbReference type="EC" id="2.5.1.67" evidence="5 7"/>
<dbReference type="EMBL" id="I13995">
    <property type="status" value="NOT_ANNOTATED_CDS"/>
    <property type="molecule type" value="Unassigned_DNA"/>
</dbReference>
<dbReference type="EMBL" id="JX913537">
    <property type="protein sequence ID" value="AFZ61535.1"/>
    <property type="molecule type" value="Genomic_DNA"/>
</dbReference>
<dbReference type="EMBL" id="JX913536">
    <property type="protein sequence ID" value="AGC03154.1"/>
    <property type="molecule type" value="mRNA"/>
</dbReference>
<dbReference type="SMR" id="P0C565"/>
<dbReference type="BRENDA" id="2.5.1.67">
    <property type="organism ID" value="8608"/>
</dbReference>
<dbReference type="GO" id="GO:0009507">
    <property type="term" value="C:chloroplast"/>
    <property type="evidence" value="ECO:0000314"/>
    <property type="project" value="UniProtKB"/>
</dbReference>
<dbReference type="GO" id="GO:0004337">
    <property type="term" value="F:(2E,6E)-farnesyl diphosphate synthase activity"/>
    <property type="evidence" value="ECO:0007669"/>
    <property type="project" value="TreeGrafter"/>
</dbReference>
<dbReference type="GO" id="GO:0033849">
    <property type="term" value="F:chrysanthemyl diphosphate synthase activity"/>
    <property type="evidence" value="ECO:0000314"/>
    <property type="project" value="UniProtKB"/>
</dbReference>
<dbReference type="GO" id="GO:0004161">
    <property type="term" value="F:dimethylallyltranstransferase activity"/>
    <property type="evidence" value="ECO:0007669"/>
    <property type="project" value="TreeGrafter"/>
</dbReference>
<dbReference type="GO" id="GO:0016787">
    <property type="term" value="F:hydrolase activity"/>
    <property type="evidence" value="ECO:0007669"/>
    <property type="project" value="UniProtKB-KW"/>
</dbReference>
<dbReference type="GO" id="GO:0000287">
    <property type="term" value="F:magnesium ion binding"/>
    <property type="evidence" value="ECO:0000314"/>
    <property type="project" value="UniProtKB"/>
</dbReference>
<dbReference type="GO" id="GO:0045337">
    <property type="term" value="P:farnesyl diphosphate biosynthetic process"/>
    <property type="evidence" value="ECO:0007669"/>
    <property type="project" value="TreeGrafter"/>
</dbReference>
<dbReference type="GO" id="GO:0008299">
    <property type="term" value="P:isoprenoid biosynthetic process"/>
    <property type="evidence" value="ECO:0000314"/>
    <property type="project" value="UniProtKB"/>
</dbReference>
<dbReference type="CDD" id="cd00685">
    <property type="entry name" value="Trans_IPPS_HT"/>
    <property type="match status" value="1"/>
</dbReference>
<dbReference type="FunFam" id="1.10.600.10:FF:000008">
    <property type="entry name" value="Farnesyl pyrophosphate synthase"/>
    <property type="match status" value="1"/>
</dbReference>
<dbReference type="Gene3D" id="1.10.600.10">
    <property type="entry name" value="Farnesyl Diphosphate Synthase"/>
    <property type="match status" value="1"/>
</dbReference>
<dbReference type="InterPro" id="IPR039702">
    <property type="entry name" value="FPS1-like"/>
</dbReference>
<dbReference type="InterPro" id="IPR008949">
    <property type="entry name" value="Isoprenoid_synthase_dom_sf"/>
</dbReference>
<dbReference type="InterPro" id="IPR000092">
    <property type="entry name" value="Polyprenyl_synt"/>
</dbReference>
<dbReference type="InterPro" id="IPR033749">
    <property type="entry name" value="Polyprenyl_synt_CS"/>
</dbReference>
<dbReference type="PANTHER" id="PTHR11525:SF0">
    <property type="entry name" value="FARNESYL PYROPHOSPHATE SYNTHASE"/>
    <property type="match status" value="1"/>
</dbReference>
<dbReference type="PANTHER" id="PTHR11525">
    <property type="entry name" value="FARNESYL-PYROPHOSPHATE SYNTHETASE"/>
    <property type="match status" value="1"/>
</dbReference>
<dbReference type="Pfam" id="PF00348">
    <property type="entry name" value="polyprenyl_synt"/>
    <property type="match status" value="1"/>
</dbReference>
<dbReference type="SFLD" id="SFLDS00005">
    <property type="entry name" value="Isoprenoid_Synthase_Type_I"/>
    <property type="match status" value="1"/>
</dbReference>
<dbReference type="SFLD" id="SFLDG01017">
    <property type="entry name" value="Polyprenyl_Transferase_Like"/>
    <property type="match status" value="1"/>
</dbReference>
<dbReference type="SUPFAM" id="SSF48576">
    <property type="entry name" value="Terpenoid synthases"/>
    <property type="match status" value="1"/>
</dbReference>
<dbReference type="PROSITE" id="PS00723">
    <property type="entry name" value="POLYPRENYL_SYNTHASE_1"/>
    <property type="match status" value="1"/>
</dbReference>
<reference key="1">
    <citation type="journal article" date="2001" name="Proc. Natl. Acad. Sci. U.S.A.">
        <title>Chrysanthemyl diphosphate synthase: isolation of the gene and characterization of the recombinant non-head-to-tail monoterpene synthase from Chrysanthemum cinerariaefolium.</title>
        <authorList>
            <person name="Rivera S.B."/>
            <person name="Swedlund B.D."/>
            <person name="King G.J."/>
            <person name="Bell R.N."/>
            <person name="Hussey C.E. Jr."/>
            <person name="Shattuck-Eidens D.M."/>
            <person name="Wrobel W.M."/>
            <person name="Peiser G.D."/>
            <person name="Poulter C.D."/>
        </authorList>
    </citation>
    <scope>NUCLEOTIDE SEQUENCE [MRNA]</scope>
    <scope>PARTIAL PROTEIN SEQUENCE</scope>
    <scope>FUNCTION</scope>
    <scope>CATALYTIC ACTIVITY</scope>
    <scope>BIOPHYSICOCHEMICAL PROPERTIES</scope>
    <scope>COFACTOR</scope>
</reference>
<reference key="2">
    <citation type="journal article" date="2012" name="Plant Cell">
        <title>Bidirectional secretions from glandular trichomes of pyrethrum enable immunization of seedlings.</title>
        <authorList>
            <person name="Ramirez A.M."/>
            <person name="Stoopen G."/>
            <person name="Menzel T.R."/>
            <person name="Gols R."/>
            <person name="Bouwmeester H.J."/>
            <person name="Dicke M."/>
            <person name="Jongsma M.A."/>
        </authorList>
    </citation>
    <scope>NUCLEOTIDE SEQUENCE [GENOMIC DNA / MRNA]</scope>
    <scope>TISSUE SPECIFICITY</scope>
    <scope>DEVELOPMENTAL STAGE</scope>
    <source>
        <tissue>Ovary</tissue>
    </source>
</reference>
<reference key="3">
    <citation type="journal article" date="2005" name="Phytochemistry">
        <title>Biosynthesis of pyrethrin I in seedlings of Chrysanthemum cinerariaefolium.</title>
        <authorList>
            <person name="Matsuda K."/>
            <person name="Kikuta Y."/>
            <person name="Haba A."/>
            <person name="Nakayama K."/>
            <person name="Katsuda Y."/>
            <person name="Hatanaka A."/>
            <person name="Komai K."/>
        </authorList>
    </citation>
    <scope>REVIEW</scope>
</reference>
<reference key="4">
    <citation type="journal article" date="2014" name="J. Biol. Chem.">
        <title>Chrysanthemyl diphosphate synthase operates in planta as a bifunctional enzyme with chrysanthemol synthase activity.</title>
        <authorList>
            <person name="Yang T."/>
            <person name="Gao L."/>
            <person name="Hu H."/>
            <person name="Stoopen G."/>
            <person name="Wang C."/>
            <person name="Jongsma M.A."/>
        </authorList>
    </citation>
    <scope>FUNCTION</scope>
    <scope>MUTAGENESIS OF ASN-283</scope>
    <scope>CATALYTIC ACTIVITY</scope>
    <scope>BIOPHYSICOCHEMICAL PROPERTIES</scope>
    <scope>PATHWAY</scope>
    <scope>SUBCELLULAR LOCATION</scope>
</reference>
<reference key="5">
    <citation type="journal article" date="2018" name="Plant Physiol.">
        <title>Coexpression analysis identifies two oxidoreductases involved in the biosynthesis of the monoterpene acid moiety of natural pyrethrin insecticides in Tanacetum cinerariifolium.</title>
        <authorList>
            <person name="Xu H."/>
            <person name="Moghe G.D."/>
            <person name="Wiegert-Rininger K."/>
            <person name="Schilmiller A.L."/>
            <person name="Barry C.S."/>
            <person name="Last R.L."/>
            <person name="Pichersky E."/>
        </authorList>
    </citation>
    <scope>TISSUE SPECIFICITY</scope>
</reference>
<reference key="6">
    <citation type="journal article" date="2019" name="Nat. Prod. Rep.">
        <title>Non-volatile natural products in plant glandular trichomes: chemistry, biological activities and biosynthesis.</title>
        <authorList>
            <person name="Liu Y."/>
            <person name="Jing S.-X."/>
            <person name="Luo S.-H."/>
            <person name="Li S.-H."/>
        </authorList>
    </citation>
    <scope>REVIEW</scope>
</reference>
<sequence>MACSSSLSSKWASWGASSRPHPSVQPFVTRKNVVRYHKPTSELSYSPLTTTLSSNLDSQFMQVYETLKSELIHDPSFEFDDDSRQWVERMIDYNVPGGKMVRGYSVVDSYQLLKGEELTEDEAFLACALGWCTEWLQAFILVLDDIMDGSHTRRGQPCWFRLPEVGVVAINDGVLLRNHVHRILKKYFQGKPYYVHLLDLFNETEFQTISGQMIDTICRLAGQKDLSKYTMTLNRRIVQYKGSYYSCYLPIACALLMFGENLEDHVQVKDILVELGMYYQIQNDYLDTFGDPDVFGKTGTDIEECKCSWLIAKALELANEEQKKILSENYGINDPSKVAKVKELYHALDLKGAYEDYETNLYETSMTSIKAHPNIAVQAVLKSCLEKMYKGHK</sequence>
<comment type="function">
    <text evidence="5 7 11">Component of the monoterpenoid pyrethrins biosynthesis; pyrethrins are widely used plant-derived pesticide (PubMed:30468448). Catalyzes the condensation of two molecules of dimethylallyl diphosphate to produce chrysanthemyl diphosphate (CPP), a monoterpene with a non-head-to-tail or irregular c1'-2-3 linkage between isoprenoid units (PubMed:11287653, PubMed:25378387). In a second step, hydrolyzes the diphosphate moiety of CPP to form chrysanthemol (PubMed:25378387). With a lower efficiency, can also converts dimethylallyl diphosphate into lavandulyl diphosphate (LPP), and subsequently LPP into lavandulol (PubMed:25378387).</text>
</comment>
<comment type="catalytic activity">
    <reaction evidence="5 7">
        <text>2 dimethylallyl diphosphate = (R,R)-chrysanthemyl diphosphate + diphosphate</text>
        <dbReference type="Rhea" id="RHEA:14009"/>
        <dbReference type="ChEBI" id="CHEBI:33019"/>
        <dbReference type="ChEBI" id="CHEBI:57623"/>
        <dbReference type="ChEBI" id="CHEBI:58819"/>
        <dbReference type="EC" id="2.5.1.67"/>
    </reaction>
    <physiologicalReaction direction="left-to-right" evidence="5 7">
        <dbReference type="Rhea" id="RHEA:14010"/>
    </physiologicalReaction>
</comment>
<comment type="catalytic activity">
    <reaction evidence="7">
        <text>(R,R)-chrysanthemyl diphosphate + H2O = (R,R)-chrysanthemol + diphosphate</text>
        <dbReference type="Rhea" id="RHEA:60024"/>
        <dbReference type="ChEBI" id="CHEBI:15377"/>
        <dbReference type="ChEBI" id="CHEBI:33019"/>
        <dbReference type="ChEBI" id="CHEBI:58819"/>
        <dbReference type="ChEBI" id="CHEBI:143898"/>
    </reaction>
    <physiologicalReaction direction="left-to-right" evidence="7">
        <dbReference type="Rhea" id="RHEA:60025"/>
    </physiologicalReaction>
</comment>
<comment type="catalytic activity">
    <reaction evidence="7">
        <text>(R)-lavandulyl diphosphate + H2O = (R)-lavandulol + diphosphate</text>
        <dbReference type="Rhea" id="RHEA:60696"/>
        <dbReference type="ChEBI" id="CHEBI:15377"/>
        <dbReference type="ChEBI" id="CHEBI:33019"/>
        <dbReference type="ChEBI" id="CHEBI:50283"/>
        <dbReference type="ChEBI" id="CHEBI:143949"/>
    </reaction>
    <physiologicalReaction direction="left-to-right" evidence="7">
        <dbReference type="Rhea" id="RHEA:60697"/>
    </physiologicalReaction>
</comment>
<comment type="cofactor">
    <cofactor evidence="5">
        <name>Mg(2+)</name>
        <dbReference type="ChEBI" id="CHEBI:18420"/>
    </cofactor>
    <text evidence="5">Binds 2 Mg(2+) ions per subunit.</text>
</comment>
<comment type="biophysicochemical properties">
    <kinetics>
        <KM evidence="5">600 uM for dimethylallyl diphosphate</KM>
        <KM evidence="7">196 uM for chrysanthemyl diphosphate</KM>
        <text evidence="5 7">kcat is 0.5 min(-1) with dimethylallyl diphosphate as substrate (PubMed:11287653). kcat is 0.0033 min(-1) with chrysanthemyl diphosphate as substrate (PubMed:25378387).</text>
    </kinetics>
    <phDependence>
        <text evidence="5">Optimum pH is 6.5-8.</text>
    </phDependence>
</comment>
<comment type="pathway">
    <text evidence="7">Isoprenoid biosynthesis.</text>
</comment>
<comment type="subcellular location">
    <subcellularLocation>
        <location evidence="7">Plastid</location>
        <location evidence="7">Chloroplast</location>
    </subcellularLocation>
</comment>
<comment type="tissue specificity">
    <text evidence="6 8">Restricted to glandular trichomes during achene maturation (PubMed:23104830). Expressed in flowers and in both ray and disk florets (PubMed:29122986).</text>
</comment>
<comment type="developmental stage">
    <text evidence="6">Mostly expressed in ovaries of flowers at stages S1 to S7 (bud to overblown), before the first disk florets opening, and prior embryos formation.</text>
</comment>
<comment type="similarity">
    <text evidence="12">Belongs to the FPP/GGPP synthase family.</text>
</comment>
<gene>
    <name evidence="10" type="primary">CDS</name>
</gene>
<protein>
    <recommendedName>
        <fullName evidence="10">Bifunctional chrysanthemol synthase, chloroplastic</fullName>
    </recommendedName>
    <alternativeName>
        <fullName evidence="10">Chrysanthemol synthase, chloroplastic</fullName>
        <ecNumber evidence="7">3.7.1.-</ecNumber>
    </alternativeName>
    <alternativeName>
        <fullName evidence="9">Chrysanthemyl diphosphate synthase, chloroplastic</fullName>
        <shortName evidence="9">CPPase</shortName>
        <shortName evidence="10">TcCDS</shortName>
        <ecNumber evidence="5 7">2.5.1.67</ecNumber>
    </alternativeName>
</protein>
<accession>P0C565</accession>
<accession>L7RFF8</accession>
<feature type="transit peptide" description="Chloroplast" evidence="3">
    <location>
        <begin position="1"/>
        <end position="53"/>
    </location>
</feature>
<feature type="chain" id="PRO_0000293960" description="Bifunctional chrysanthemol synthase, chloroplastic">
    <location>
        <begin position="54"/>
        <end position="393"/>
    </location>
</feature>
<feature type="region of interest" description="Disordered" evidence="4">
    <location>
        <begin position="1"/>
        <end position="22"/>
    </location>
</feature>
<feature type="compositionally biased region" description="Low complexity" evidence="4">
    <location>
        <begin position="1"/>
        <end position="18"/>
    </location>
</feature>
<feature type="binding site" evidence="1">
    <location>
        <position position="99"/>
    </location>
    <ligand>
        <name>dimethylallyl diphosphate</name>
        <dbReference type="ChEBI" id="CHEBI:57623"/>
        <label>1</label>
    </ligand>
</feature>
<feature type="binding site" evidence="1">
    <location>
        <position position="102"/>
    </location>
    <ligand>
        <name>dimethylallyl diphosphate</name>
        <dbReference type="ChEBI" id="CHEBI:57623"/>
        <label>1</label>
    </ligand>
</feature>
<feature type="binding site" evidence="1">
    <location>
        <position position="137"/>
    </location>
    <ligand>
        <name>dimethylallyl diphosphate</name>
        <dbReference type="ChEBI" id="CHEBI:57623"/>
        <label>1</label>
    </ligand>
</feature>
<feature type="binding site" evidence="1">
    <location>
        <position position="144"/>
    </location>
    <ligand>
        <name>Mg(2+)</name>
        <dbReference type="ChEBI" id="CHEBI:18420"/>
        <label>1</label>
    </ligand>
</feature>
<feature type="binding site" evidence="1">
    <location>
        <position position="144"/>
    </location>
    <ligand>
        <name>Mg(2+)</name>
        <dbReference type="ChEBI" id="CHEBI:18420"/>
        <label>2</label>
    </ligand>
</feature>
<feature type="binding site" evidence="1">
    <location>
        <position position="148"/>
    </location>
    <ligand>
        <name>Mg(2+)</name>
        <dbReference type="ChEBI" id="CHEBI:18420"/>
        <label>1</label>
    </ligand>
</feature>
<feature type="binding site" evidence="1">
    <location>
        <position position="148"/>
    </location>
    <ligand>
        <name>Mg(2+)</name>
        <dbReference type="ChEBI" id="CHEBI:18420"/>
        <label>2</label>
    </ligand>
</feature>
<feature type="binding site" evidence="2">
    <location>
        <position position="153"/>
    </location>
    <ligand>
        <name>dimethylallyl diphosphate</name>
        <dbReference type="ChEBI" id="CHEBI:57623"/>
        <label>2</label>
    </ligand>
</feature>
<feature type="binding site" evidence="1">
    <location>
        <position position="154"/>
    </location>
    <ligand>
        <name>dimethylallyl diphosphate</name>
        <dbReference type="ChEBI" id="CHEBI:57623"/>
        <label>1</label>
    </ligand>
</feature>
<feature type="binding site" evidence="2">
    <location>
        <position position="241"/>
    </location>
    <ligand>
        <name>dimethylallyl diphosphate</name>
        <dbReference type="ChEBI" id="CHEBI:57623"/>
        <label>2</label>
    </ligand>
</feature>
<feature type="binding site" evidence="2">
    <location>
        <position position="280"/>
    </location>
    <ligand>
        <name>dimethylallyl diphosphate</name>
        <dbReference type="ChEBI" id="CHEBI:57623"/>
        <label>2</label>
    </ligand>
</feature>
<feature type="binding site" evidence="2">
    <location>
        <position position="287"/>
    </location>
    <ligand>
        <name>dimethylallyl diphosphate</name>
        <dbReference type="ChEBI" id="CHEBI:57623"/>
        <label>2</label>
    </ligand>
</feature>
<feature type="binding site" evidence="2">
    <location>
        <position position="297"/>
    </location>
    <ligand>
        <name>dimethylallyl diphosphate</name>
        <dbReference type="ChEBI" id="CHEBI:57623"/>
        <label>1</label>
    </ligand>
</feature>
<feature type="binding site" evidence="2">
    <location>
        <position position="306"/>
    </location>
    <ligand>
        <name>dimethylallyl diphosphate</name>
        <dbReference type="ChEBI" id="CHEBI:57623"/>
        <label>2</label>
    </ligand>
</feature>
<feature type="site" description="Required for catalytic activities" evidence="7">
    <location>
        <position position="283"/>
    </location>
</feature>
<feature type="mutagenesis site" description="Abolished terpene synthase and prenyltransferase activities leading to lost production of chrysanthemyl diphosphate and chrysanthemol." evidence="7">
    <original>N</original>
    <variation>D</variation>
    <variation>G</variation>
    <location>
        <position position="283"/>
    </location>
</feature>
<feature type="sequence conflict" description="In Ref. 1; I13995." evidence="12" ref="1">
    <original>ACSS</original>
    <variation>SWCLLC</variation>
    <location>
        <begin position="2"/>
        <end position="5"/>
    </location>
</feature>
<proteinExistence type="evidence at protein level"/>
<keyword id="KW-0150">Chloroplast</keyword>
<keyword id="KW-0903">Direct protein sequencing</keyword>
<keyword id="KW-0378">Hydrolase</keyword>
<keyword id="KW-0414">Isoprene biosynthesis</keyword>
<keyword id="KW-0460">Magnesium</keyword>
<keyword id="KW-0479">Metal-binding</keyword>
<keyword id="KW-0934">Plastid</keyword>
<keyword id="KW-0808">Transferase</keyword>
<keyword id="KW-0809">Transit peptide</keyword>